<organism>
    <name type="scientific">Homo sapiens</name>
    <name type="common">Human</name>
    <dbReference type="NCBI Taxonomy" id="9606"/>
    <lineage>
        <taxon>Eukaryota</taxon>
        <taxon>Metazoa</taxon>
        <taxon>Chordata</taxon>
        <taxon>Craniata</taxon>
        <taxon>Vertebrata</taxon>
        <taxon>Euteleostomi</taxon>
        <taxon>Mammalia</taxon>
        <taxon>Eutheria</taxon>
        <taxon>Euarchontoglires</taxon>
        <taxon>Primates</taxon>
        <taxon>Haplorrhini</taxon>
        <taxon>Catarrhini</taxon>
        <taxon>Hominidae</taxon>
        <taxon>Homo</taxon>
    </lineage>
</organism>
<evidence type="ECO:0000250" key="1">
    <source>
        <dbReference type="UniProtKB" id="Q8C4Y3"/>
    </source>
</evidence>
<evidence type="ECO:0000256" key="2">
    <source>
        <dbReference type="SAM" id="MobiDB-lite"/>
    </source>
</evidence>
<evidence type="ECO:0000269" key="3">
    <source>
    </source>
</evidence>
<evidence type="ECO:0000269" key="4">
    <source>
    </source>
</evidence>
<evidence type="ECO:0000269" key="5">
    <source>
    </source>
</evidence>
<evidence type="ECO:0000269" key="6">
    <source>
    </source>
</evidence>
<evidence type="ECO:0000269" key="7">
    <source>
    </source>
</evidence>
<evidence type="ECO:0000269" key="8">
    <source>
    </source>
</evidence>
<evidence type="ECO:0000303" key="9">
    <source>
    </source>
</evidence>
<evidence type="ECO:0000305" key="10"/>
<evidence type="ECO:0000305" key="11">
    <source>
    </source>
</evidence>
<evidence type="ECO:0007744" key="12">
    <source>
    </source>
</evidence>
<evidence type="ECO:0007744" key="13">
    <source>
    </source>
</evidence>
<evidence type="ECO:0007744" key="14">
    <source>
    </source>
</evidence>
<evidence type="ECO:0007744" key="15">
    <source>
    </source>
</evidence>
<evidence type="ECO:0007744" key="16">
    <source>
    </source>
</evidence>
<evidence type="ECO:0007744" key="17">
    <source>
    </source>
</evidence>
<evidence type="ECO:0007829" key="18">
    <source>
        <dbReference type="PDB" id="8JJ6"/>
    </source>
</evidence>
<evidence type="ECO:0007829" key="19">
    <source>
        <dbReference type="PDB" id="8UHA"/>
    </source>
</evidence>
<evidence type="ECO:0007829" key="20">
    <source>
        <dbReference type="PDB" id="8UHG"/>
    </source>
</evidence>
<protein>
    <recommendedName>
        <fullName>Negative elongation factor B</fullName>
        <shortName>NELF-B</shortName>
    </recommendedName>
    <alternativeName>
        <fullName evidence="9">Cofactor of BRCA1</fullName>
    </alternativeName>
</protein>
<gene>
    <name type="primary">NELFB</name>
    <name evidence="9" type="synonym">COBRA1</name>
    <name type="synonym">KIAA1182</name>
</gene>
<comment type="function">
    <text evidence="1 3 4 5">Essential component of the NELF complex, a complex that negatively regulates the elongation of transcription by RNA polymerase II (PubMed:12612062). The NELF complex, which acts via an association with the DSIF complex and causes transcriptional pausing, is counteracted by the P-TEFb kinase complex (PubMed:10199401). May be able to induce chromatin unfolding (PubMed:11739404). Essential for early embryogenesis; plays an important role in maintaining the undifferentiated state of embryonic stem cells (ESCs) by preventing unscheduled expression of developmental genes (By similarity). Plays a key role in establishing the responsiveness of stem cells to developmental cues; facilitates plasticity and cell fate commitment in ESCs by establishing the appropriate expression level of signaling molecules (By similarity). Supports the transcription of genes involved in energy metabolism in cardiomyocytes; facilitates the association of transcription initiation factors with the promoters of the metabolism-related genes (By similarity).</text>
</comment>
<comment type="function">
    <text evidence="7">(Microbial infection) The NELF complex is involved in HIV-1 latency possibly involving recruitment of PCF11 to paused RNA polymerase II (PubMed:23884411). In vitro, binds weakly to the HIV-1 TAR RNA which is located in the long terminal repeat (LTR) of HIV-1 (PubMed:23884411).</text>
</comment>
<comment type="subunit">
    <text evidence="1 4 5 6 8">The NELF complex is composed of NELFA, NELFB, NELFCD (isoform NELF-C or isoform NELF-D) and NELFE; the N-terminus of NELFB binds to the NELFA:NELFCD subcomplex (PubMed:12612062). Binds RNA which may help to stabilize the NELF complex on nucleic acid (PubMed:27282391). Interacts with the first BRCT repeat of BRCA1 (PubMed:11739404). Interacts with KIAA1191 (PubMed:21153684). Interacts with NELFE (By similarity).</text>
</comment>
<comment type="interaction">
    <interactant intactId="EBI-347721">
        <id>Q8WX92</id>
    </interactant>
    <interactant intactId="EBI-349905">
        <id>P38398</id>
        <label>BRCA1</label>
    </interactant>
    <organismsDiffer>false</organismsDiffer>
    <experiments>5</experiments>
</comment>
<comment type="interaction">
    <interactant intactId="EBI-347721">
        <id>Q8WX92</id>
    </interactant>
    <interactant intactId="EBI-716083">
        <id>O43583</id>
        <label>DENR</label>
    </interactant>
    <organismsDiffer>false</organismsDiffer>
    <experiments>2</experiments>
</comment>
<comment type="interaction">
    <interactant intactId="EBI-347721">
        <id>Q8WX92</id>
    </interactant>
    <interactant intactId="EBI-515315">
        <id>P06241</id>
        <label>FYN</label>
    </interactant>
    <organismsDiffer>false</organismsDiffer>
    <experiments>2</experiments>
</comment>
<comment type="interaction">
    <interactant intactId="EBI-347721">
        <id>Q8WX92</id>
    </interactant>
    <interactant intactId="EBI-401755">
        <id>P62993</id>
        <label>GRB2</label>
    </interactant>
    <organismsDiffer>false</organismsDiffer>
    <experiments>2</experiments>
</comment>
<comment type="interaction">
    <interactant intactId="EBI-347721">
        <id>Q8WX92</id>
    </interactant>
    <interactant intactId="EBI-354932">
        <id>P38646</id>
        <label>HSPA9</label>
    </interactant>
    <organismsDiffer>false</organismsDiffer>
    <experiments>2</experiments>
</comment>
<comment type="interaction">
    <interactant intactId="EBI-347721">
        <id>Q8WX92</id>
    </interactant>
    <interactant intactId="EBI-722504">
        <id>O75525</id>
        <label>KHDRBS3</label>
    </interactant>
    <organismsDiffer>false</organismsDiffer>
    <experiments>2</experiments>
</comment>
<comment type="interaction">
    <interactant intactId="EBI-347721">
        <id>Q8WX92</id>
    </interactant>
    <interactant intactId="EBI-2691601">
        <id>P10620</id>
        <label>MGST1</label>
    </interactant>
    <organismsDiffer>false</organismsDiffer>
    <experiments>2</experiments>
</comment>
<comment type="interaction">
    <interactant intactId="EBI-347721">
        <id>Q8WX92</id>
    </interactant>
    <interactant intactId="EBI-389883">
        <id>P16333</id>
        <label>NCK1</label>
    </interactant>
    <organismsDiffer>false</organismsDiffer>
    <experiments>6</experiments>
</comment>
<comment type="interaction">
    <interactant intactId="EBI-347721">
        <id>Q8WX92</id>
    </interactant>
    <interactant intactId="EBI-348444">
        <id>P18615</id>
        <label>NELFE</label>
    </interactant>
    <organismsDiffer>false</organismsDiffer>
    <experiments>9</experiments>
</comment>
<comment type="interaction">
    <interactant intactId="EBI-347721">
        <id>Q8WX92</id>
    </interactant>
    <interactant intactId="EBI-79464">
        <id>P27986</id>
        <label>PIK3R1</label>
    </interactant>
    <organismsDiffer>false</organismsDiffer>
    <experiments>2</experiments>
</comment>
<comment type="interaction">
    <interactant intactId="EBI-22734860">
        <id>Q8WX92-2</id>
    </interactant>
    <interactant intactId="EBI-536725">
        <id>Q8IXH7</id>
        <label>NELFCD</label>
    </interactant>
    <organismsDiffer>false</organismsDiffer>
    <experiments>3</experiments>
</comment>
<comment type="interaction">
    <interactant intactId="EBI-22734860">
        <id>Q8WX92-2</id>
    </interactant>
    <interactant intactId="EBI-348444">
        <id>P18615</id>
        <label>NELFE</label>
    </interactant>
    <organismsDiffer>false</organismsDiffer>
    <experiments>7</experiments>
</comment>
<comment type="interaction">
    <interactant intactId="EBI-22734860">
        <id>Q8WX92-2</id>
    </interactant>
    <interactant intactId="EBI-14115717">
        <id>Q8N7U7-2</id>
        <label>TPRX1</label>
    </interactant>
    <organismsDiffer>false</organismsDiffer>
    <experiments>3</experiments>
</comment>
<comment type="subcellular location">
    <subcellularLocation>
        <location evidence="4">Nucleus</location>
    </subcellularLocation>
</comment>
<comment type="alternative products">
    <event type="alternative initiation"/>
    <isoform>
        <id>Q8WX92-1</id>
        <name>1</name>
        <sequence type="displayed"/>
    </isoform>
    <isoform>
        <id>Q8WX92-2</id>
        <name>2</name>
        <sequence type="described" ref="VSP_059998"/>
    </isoform>
</comment>
<comment type="tissue specificity">
    <text evidence="5">Widely expressed. Expressed in heart, brain, lung, placenta, liver, skeletal muscle, kidney and pancreas.</text>
</comment>
<comment type="miscellaneous">
    <molecule>Isoform 2</molecule>
    <text evidence="11">Produced by alternative initiation at a CTG start codon.</text>
</comment>
<comment type="similarity">
    <text evidence="10">Belongs to the NELF-B family.</text>
</comment>
<comment type="sequence caution" evidence="10">
    <conflict type="erroneous initiation">
        <sequence resource="EMBL-CDS" id="AAH11892"/>
    </conflict>
    <text>Truncated N-terminus.</text>
</comment>
<comment type="sequence caution" evidence="10">
    <conflict type="erroneous initiation">
        <sequence resource="EMBL-CDS" id="BAB14157"/>
    </conflict>
    <text>Truncated N-terminus.</text>
</comment>
<comment type="sequence caution" evidence="10">
    <conflict type="erroneous initiation">
        <sequence resource="EMBL-CDS" id="BAG52272"/>
    </conflict>
    <text>Truncated N-terminus.</text>
</comment>
<comment type="sequence caution" evidence="10">
    <conflict type="erroneous initiation">
        <sequence resource="EMBL-CDS" id="CAB43381"/>
    </conflict>
    <text>Truncated N-terminus.</text>
</comment>
<feature type="chain" id="PRO_0000219129" description="Negative elongation factor B">
    <location>
        <begin position="1"/>
        <end position="580"/>
    </location>
</feature>
<feature type="region of interest" description="Disordered" evidence="2">
    <location>
        <begin position="548"/>
        <end position="580"/>
    </location>
</feature>
<feature type="modified residue" description="N6-acetyllysine" evidence="13">
    <location>
        <position position="519"/>
    </location>
</feature>
<feature type="modified residue" description="Phosphoserine" evidence="12 14 15 16 17">
    <location>
        <position position="557"/>
    </location>
</feature>
<feature type="splice variant" id="VSP_059998" description="In isoform 2." evidence="10">
    <original>M</original>
    <variation>MAELEGAGERGSGGPRGPAERASGVSAAAPGERAGDGAPSRAVAGASAM</variation>
    <location>
        <position position="1"/>
    </location>
</feature>
<feature type="sequence conflict" description="In Ref. 2; BAB14157." evidence="10" ref="2">
    <original>L</original>
    <variation>F</variation>
    <location>
        <position position="156"/>
    </location>
</feature>
<feature type="sequence conflict" description="In Ref. 5; CAB43381." evidence="10" ref="5">
    <original>S</original>
    <variation>A</variation>
    <location>
        <position position="182"/>
    </location>
</feature>
<feature type="helix" evidence="20">
    <location>
        <begin position="6"/>
        <end position="8"/>
    </location>
</feature>
<feature type="helix" evidence="20">
    <location>
        <begin position="13"/>
        <end position="20"/>
    </location>
</feature>
<feature type="helix" evidence="20">
    <location>
        <begin position="26"/>
        <end position="36"/>
    </location>
</feature>
<feature type="helix" evidence="20">
    <location>
        <begin position="44"/>
        <end position="53"/>
    </location>
</feature>
<feature type="helix" evidence="20">
    <location>
        <begin position="58"/>
        <end position="82"/>
    </location>
</feature>
<feature type="helix" evidence="20">
    <location>
        <begin position="86"/>
        <end position="100"/>
    </location>
</feature>
<feature type="helix" evidence="20">
    <location>
        <begin position="101"/>
        <end position="103"/>
    </location>
</feature>
<feature type="turn" evidence="20">
    <location>
        <begin position="104"/>
        <end position="107"/>
    </location>
</feature>
<feature type="helix" evidence="20">
    <location>
        <begin position="110"/>
        <end position="119"/>
    </location>
</feature>
<feature type="helix" evidence="20">
    <location>
        <begin position="126"/>
        <end position="133"/>
    </location>
</feature>
<feature type="helix" evidence="20">
    <location>
        <begin position="135"/>
        <end position="140"/>
    </location>
</feature>
<feature type="helix" evidence="20">
    <location>
        <begin position="143"/>
        <end position="152"/>
    </location>
</feature>
<feature type="helix" evidence="20">
    <location>
        <begin position="155"/>
        <end position="176"/>
    </location>
</feature>
<feature type="strand" evidence="18">
    <location>
        <begin position="183"/>
        <end position="185"/>
    </location>
</feature>
<feature type="helix" evidence="20">
    <location>
        <begin position="192"/>
        <end position="195"/>
    </location>
</feature>
<feature type="helix" evidence="20">
    <location>
        <begin position="199"/>
        <end position="208"/>
    </location>
</feature>
<feature type="helix" evidence="20">
    <location>
        <begin position="212"/>
        <end position="229"/>
    </location>
</feature>
<feature type="helix" evidence="20">
    <location>
        <begin position="233"/>
        <end position="247"/>
    </location>
</feature>
<feature type="helix" evidence="20">
    <location>
        <begin position="251"/>
        <end position="254"/>
    </location>
</feature>
<feature type="helix" evidence="20">
    <location>
        <begin position="260"/>
        <end position="272"/>
    </location>
</feature>
<feature type="helix" evidence="20">
    <location>
        <begin position="277"/>
        <end position="288"/>
    </location>
</feature>
<feature type="helix" evidence="20">
    <location>
        <begin position="298"/>
        <end position="304"/>
    </location>
</feature>
<feature type="helix" evidence="20">
    <location>
        <begin position="308"/>
        <end position="328"/>
    </location>
</feature>
<feature type="helix" evidence="20">
    <location>
        <begin position="332"/>
        <end position="334"/>
    </location>
</feature>
<feature type="helix" evidence="20">
    <location>
        <begin position="336"/>
        <end position="349"/>
    </location>
</feature>
<feature type="helix" evidence="20">
    <location>
        <begin position="351"/>
        <end position="356"/>
    </location>
</feature>
<feature type="helix" evidence="20">
    <location>
        <begin position="367"/>
        <end position="371"/>
    </location>
</feature>
<feature type="helix" evidence="20">
    <location>
        <begin position="373"/>
        <end position="392"/>
    </location>
</feature>
<feature type="helix" evidence="20">
    <location>
        <begin position="409"/>
        <end position="417"/>
    </location>
</feature>
<feature type="helix" evidence="20">
    <location>
        <begin position="419"/>
        <end position="434"/>
    </location>
</feature>
<feature type="helix" evidence="20">
    <location>
        <begin position="438"/>
        <end position="444"/>
    </location>
</feature>
<feature type="turn" evidence="20">
    <location>
        <begin position="446"/>
        <end position="449"/>
    </location>
</feature>
<feature type="helix" evidence="20">
    <location>
        <begin position="455"/>
        <end position="457"/>
    </location>
</feature>
<feature type="helix" evidence="20">
    <location>
        <begin position="459"/>
        <end position="468"/>
    </location>
</feature>
<feature type="turn" evidence="20">
    <location>
        <begin position="469"/>
        <end position="472"/>
    </location>
</feature>
<feature type="helix" evidence="20">
    <location>
        <begin position="474"/>
        <end position="476"/>
    </location>
</feature>
<feature type="helix" evidence="20">
    <location>
        <begin position="479"/>
        <end position="485"/>
    </location>
</feature>
<feature type="turn" evidence="20">
    <location>
        <begin position="486"/>
        <end position="489"/>
    </location>
</feature>
<feature type="helix" evidence="20">
    <location>
        <begin position="490"/>
        <end position="493"/>
    </location>
</feature>
<feature type="turn" evidence="20">
    <location>
        <begin position="494"/>
        <end position="496"/>
    </location>
</feature>
<feature type="helix" evidence="20">
    <location>
        <begin position="498"/>
        <end position="510"/>
    </location>
</feature>
<feature type="turn" evidence="20">
    <location>
        <begin position="511"/>
        <end position="514"/>
    </location>
</feature>
<feature type="helix" evidence="20">
    <location>
        <begin position="517"/>
        <end position="526"/>
    </location>
</feature>
<feature type="strand" evidence="19">
    <location>
        <begin position="531"/>
        <end position="533"/>
    </location>
</feature>
<feature type="helix" evidence="20">
    <location>
        <begin position="535"/>
        <end position="552"/>
    </location>
</feature>
<name>NELFB_HUMAN</name>
<accession>Q8WX92</accession>
<accession>A0A0X1KG71</accession>
<accession>A2BFA3</accession>
<accession>Q96EW5</accession>
<accession>Q9H9R4</accession>
<accession>Q9ULN8</accession>
<accession>Q9Y3W0</accession>
<sequence length="580" mass="65697">MFAGLQDLGVANGEDLKETLTNCTEPLKAIEQFQTENGVLLPSLQSALPFLDLHGTPRLEFHQSVFDELRDKLLERVSAIASEGKAEERYKKLEDLLEKSFSLVKMPSLQPVVMCVMKHLPKVPEKKLKLVMADKELYRACAVEVKRQIWQDNQALFGDEVSPLLKQYILEKESALFSTELSVLHNFFSPSPKTRRQGEVVQRLTRMVGKNVKLYDMVLQFLRTLFLRTRNVHYCTLRAELLMSLHDLDVGEICTVDPCHKFTWCLDACIRERFVDSKRARELQGFLDGVKKGQEQVLGDLSMILCDPFAINTLALSTVRHLQELVGQETLPRDSPDLLLLLRLLALGQGAWDMIDSQVFKEPKMEVELITRFLPMLMSFLVDDYTFNVDQKLPAEEKAPVSYPNTLPESFTKFLQEQRMACEVGLYYVLHITKQRNKNALLRLLPGLVETFGDLAFGDIFLHLLTGNLALLADEFALEDFCSSLFDGFFLTASPRKENVHRHALRLLIHLHPRVAPSKLEALQKALEPTGQSGEAVKELYSQLGEKLEQLDHRKPSPAQAAETPALELPLPSVPAPAPL</sequence>
<keyword id="KW-0002">3D-structure</keyword>
<keyword id="KW-0007">Acetylation</keyword>
<keyword id="KW-0024">Alternative initiation</keyword>
<keyword id="KW-0903">Direct protein sequencing</keyword>
<keyword id="KW-0539">Nucleus</keyword>
<keyword id="KW-0597">Phosphoprotein</keyword>
<keyword id="KW-1267">Proteomics identification</keyword>
<keyword id="KW-1185">Reference proteome</keyword>
<keyword id="KW-0678">Repressor</keyword>
<keyword id="KW-0694">RNA-binding</keyword>
<keyword id="KW-0804">Transcription</keyword>
<keyword id="KW-0805">Transcription regulation</keyword>
<dbReference type="EMBL" id="AF464935">
    <property type="protein sequence ID" value="AAL69965.1"/>
    <property type="molecule type" value="mRNA"/>
</dbReference>
<dbReference type="EMBL" id="AK022651">
    <property type="protein sequence ID" value="BAB14157.1"/>
    <property type="status" value="ALT_INIT"/>
    <property type="molecule type" value="mRNA"/>
</dbReference>
<dbReference type="EMBL" id="AK091056">
    <property type="protein sequence ID" value="BAG52272.1"/>
    <property type="status" value="ALT_INIT"/>
    <property type="molecule type" value="mRNA"/>
</dbReference>
<dbReference type="EMBL" id="BX255925">
    <property type="status" value="NOT_ANNOTATED_CDS"/>
    <property type="molecule type" value="Genomic_DNA"/>
</dbReference>
<dbReference type="EMBL" id="BC011892">
    <property type="protein sequence ID" value="AAH11892.1"/>
    <property type="status" value="ALT_INIT"/>
    <property type="molecule type" value="mRNA"/>
</dbReference>
<dbReference type="EMBL" id="AL050280">
    <property type="protein sequence ID" value="CAB43381.3"/>
    <property type="status" value="ALT_INIT"/>
    <property type="molecule type" value="mRNA"/>
</dbReference>
<dbReference type="EMBL" id="AB033008">
    <property type="protein sequence ID" value="BAA86496.1"/>
    <property type="molecule type" value="mRNA"/>
</dbReference>
<dbReference type="CCDS" id="CCDS7040.2">
    <molecule id="Q8WX92-2"/>
</dbReference>
<dbReference type="PIR" id="T08747">
    <property type="entry name" value="T08747"/>
</dbReference>
<dbReference type="RefSeq" id="NP_056271.3">
    <molecule id="Q8WX92-2"/>
    <property type="nucleotide sequence ID" value="NM_015456.4"/>
</dbReference>
<dbReference type="PDB" id="6GML">
    <property type="method" value="EM"/>
    <property type="resolution" value="3.20 A"/>
    <property type="chains" value="V=42-580"/>
</dbReference>
<dbReference type="PDB" id="7PKS">
    <property type="method" value="EM"/>
    <property type="resolution" value="3.60 A"/>
    <property type="chains" value="V=1-580"/>
</dbReference>
<dbReference type="PDB" id="7YCX">
    <property type="method" value="EM"/>
    <property type="resolution" value="4.18 A"/>
    <property type="chains" value="f=1-580"/>
</dbReference>
<dbReference type="PDB" id="8JJ6">
    <property type="method" value="X-ray"/>
    <property type="resolution" value="2.72 A"/>
    <property type="chains" value="A/B=1-560"/>
</dbReference>
<dbReference type="PDB" id="8RBX">
    <property type="method" value="EM"/>
    <property type="resolution" value="4.10 A"/>
    <property type="chains" value="v=1-580"/>
</dbReference>
<dbReference type="PDB" id="8UHA">
    <property type="method" value="EM"/>
    <property type="resolution" value="3.50 A"/>
    <property type="chains" value="V=1-580"/>
</dbReference>
<dbReference type="PDB" id="8UHD">
    <property type="method" value="EM"/>
    <property type="resolution" value="2.80 A"/>
    <property type="chains" value="V=1-580"/>
</dbReference>
<dbReference type="PDB" id="8UHG">
    <property type="method" value="EM"/>
    <property type="resolution" value="2.70 A"/>
    <property type="chains" value="V=1-554"/>
</dbReference>
<dbReference type="PDB" id="8UI0">
    <property type="method" value="EM"/>
    <property type="resolution" value="2.70 A"/>
    <property type="chains" value="V=1-554"/>
</dbReference>
<dbReference type="PDB" id="8W8E">
    <property type="method" value="EM"/>
    <property type="resolution" value="3.90 A"/>
    <property type="chains" value="V=1-580"/>
</dbReference>
<dbReference type="PDB" id="9J0N">
    <property type="method" value="EM"/>
    <property type="resolution" value="3.40 A"/>
    <property type="chains" value="V=1-580"/>
</dbReference>
<dbReference type="PDB" id="9J0O">
    <property type="method" value="EM"/>
    <property type="resolution" value="3.30 A"/>
    <property type="chains" value="V=1-580"/>
</dbReference>
<dbReference type="PDB" id="9J0P">
    <property type="method" value="EM"/>
    <property type="resolution" value="3.30 A"/>
    <property type="chains" value="V=1-580"/>
</dbReference>
<dbReference type="PDBsum" id="6GML"/>
<dbReference type="PDBsum" id="7PKS"/>
<dbReference type="PDBsum" id="7YCX"/>
<dbReference type="PDBsum" id="8JJ6"/>
<dbReference type="PDBsum" id="8RBX"/>
<dbReference type="PDBsum" id="8UHA"/>
<dbReference type="PDBsum" id="8UHD"/>
<dbReference type="PDBsum" id="8UHG"/>
<dbReference type="PDBsum" id="8UI0"/>
<dbReference type="PDBsum" id="8W8E"/>
<dbReference type="PDBsum" id="9J0N"/>
<dbReference type="PDBsum" id="9J0O"/>
<dbReference type="PDBsum" id="9J0P"/>
<dbReference type="EMDB" id="EMD-0038"/>
<dbReference type="EMDB" id="EMD-13479"/>
<dbReference type="EMDB" id="EMD-19038"/>
<dbReference type="EMDB" id="EMD-33741"/>
<dbReference type="EMDB" id="EMD-37352"/>
<dbReference type="EMDB" id="EMD-42267"/>
<dbReference type="EMDB" id="EMD-42270"/>
<dbReference type="EMDB" id="EMD-42280"/>
<dbReference type="EMDB" id="EMD-42285"/>
<dbReference type="EMDB" id="EMD-42304"/>
<dbReference type="EMDB" id="EMD-61058"/>
<dbReference type="EMDB" id="EMD-61059"/>
<dbReference type="EMDB" id="EMD-61060"/>
<dbReference type="SMR" id="Q8WX92"/>
<dbReference type="BioGRID" id="117421">
    <property type="interactions" value="123"/>
</dbReference>
<dbReference type="ComplexPortal" id="CPX-6267">
    <property type="entry name" value="NELF negative elongation factor complex"/>
</dbReference>
<dbReference type="CORUM" id="Q8WX92"/>
<dbReference type="DIP" id="DIP-32670N"/>
<dbReference type="FunCoup" id="Q8WX92">
    <property type="interactions" value="3848"/>
</dbReference>
<dbReference type="IntAct" id="Q8WX92">
    <property type="interactions" value="67"/>
</dbReference>
<dbReference type="MINT" id="Q8WX92"/>
<dbReference type="STRING" id="9606.ENSP00000339495"/>
<dbReference type="iPTMnet" id="Q8WX92"/>
<dbReference type="PhosphoSitePlus" id="Q8WX92"/>
<dbReference type="SwissPalm" id="Q8WX92"/>
<dbReference type="BioMuta" id="NELFB"/>
<dbReference type="DMDM" id="38372378"/>
<dbReference type="jPOST" id="Q8WX92"/>
<dbReference type="MassIVE" id="Q8WX92"/>
<dbReference type="PaxDb" id="9606-ENSP00000339495"/>
<dbReference type="PeptideAtlas" id="Q8WX92"/>
<dbReference type="ProteomicsDB" id="74978"/>
<dbReference type="Pumba" id="Q8WX92"/>
<dbReference type="DNASU" id="25920"/>
<dbReference type="Ensembl" id="ENST00000343053.6">
    <molecule id="Q8WX92-2"/>
    <property type="protein sequence ID" value="ENSP00000339495.6"/>
    <property type="gene ID" value="ENSG00000188986.9"/>
</dbReference>
<dbReference type="GeneID" id="25920"/>
<dbReference type="KEGG" id="hsa:25920"/>
<dbReference type="MANE-Select" id="ENST00000343053.6">
    <molecule id="Q8WX92-2"/>
    <property type="protein sequence ID" value="ENSP00000339495.6"/>
    <property type="RefSeq nucleotide sequence ID" value="NM_015456.5"/>
    <property type="RefSeq protein sequence ID" value="NP_056271.3"/>
</dbReference>
<dbReference type="UCSC" id="uc004cmm.5">
    <molecule id="Q8WX92-1"/>
    <property type="organism name" value="human"/>
</dbReference>
<dbReference type="AGR" id="HGNC:24324"/>
<dbReference type="CTD" id="25920"/>
<dbReference type="DisGeNET" id="25920"/>
<dbReference type="GeneCards" id="NELFB"/>
<dbReference type="HGNC" id="HGNC:24324">
    <property type="gene designation" value="NELFB"/>
</dbReference>
<dbReference type="HPA" id="ENSG00000188986">
    <property type="expression patterns" value="Low tissue specificity"/>
</dbReference>
<dbReference type="MIM" id="611180">
    <property type="type" value="gene"/>
</dbReference>
<dbReference type="neXtProt" id="NX_Q8WX92"/>
<dbReference type="OpenTargets" id="ENSG00000188986"/>
<dbReference type="PharmGKB" id="PA162382703"/>
<dbReference type="eggNOG" id="ENOG502QTMJ">
    <property type="taxonomic scope" value="Eukaryota"/>
</dbReference>
<dbReference type="GeneTree" id="ENSGT00390000012665"/>
<dbReference type="HOGENOM" id="CLU_037919_0_0_1"/>
<dbReference type="InParanoid" id="Q8WX92"/>
<dbReference type="OMA" id="LLWYIHP"/>
<dbReference type="OrthoDB" id="5548359at2759"/>
<dbReference type="PAN-GO" id="Q8WX92">
    <property type="GO annotations" value="2 GO annotations based on evolutionary models"/>
</dbReference>
<dbReference type="PhylomeDB" id="Q8WX92"/>
<dbReference type="TreeFam" id="TF324620"/>
<dbReference type="PathwayCommons" id="Q8WX92"/>
<dbReference type="Reactome" id="R-HSA-112382">
    <property type="pathway name" value="Formation of RNA Pol II elongation complex"/>
</dbReference>
<dbReference type="Reactome" id="R-HSA-113418">
    <property type="pathway name" value="Formation of the Early Elongation Complex"/>
</dbReference>
<dbReference type="Reactome" id="R-HSA-167152">
    <property type="pathway name" value="Formation of HIV elongation complex in the absence of HIV Tat"/>
</dbReference>
<dbReference type="Reactome" id="R-HSA-167158">
    <property type="pathway name" value="Formation of the HIV-1 Early Elongation Complex"/>
</dbReference>
<dbReference type="Reactome" id="R-HSA-167200">
    <property type="pathway name" value="Formation of HIV-1 elongation complex containing HIV-1 Tat"/>
</dbReference>
<dbReference type="Reactome" id="R-HSA-167238">
    <property type="pathway name" value="Pausing and recovery of Tat-mediated HIV elongation"/>
</dbReference>
<dbReference type="Reactome" id="R-HSA-167242">
    <property type="pathway name" value="Abortive elongation of HIV-1 transcript in the absence of Tat"/>
</dbReference>
<dbReference type="Reactome" id="R-HSA-167243">
    <property type="pathway name" value="Tat-mediated HIV elongation arrest and recovery"/>
</dbReference>
<dbReference type="Reactome" id="R-HSA-167246">
    <property type="pathway name" value="Tat-mediated elongation of the HIV-1 transcript"/>
</dbReference>
<dbReference type="Reactome" id="R-HSA-167287">
    <property type="pathway name" value="HIV elongation arrest and recovery"/>
</dbReference>
<dbReference type="Reactome" id="R-HSA-167290">
    <property type="pathway name" value="Pausing and recovery of HIV elongation"/>
</dbReference>
<dbReference type="Reactome" id="R-HSA-674695">
    <property type="pathway name" value="RNA Polymerase II Pre-transcription Events"/>
</dbReference>
<dbReference type="Reactome" id="R-HSA-6796648">
    <property type="pathway name" value="TP53 Regulates Transcription of DNA Repair Genes"/>
</dbReference>
<dbReference type="Reactome" id="R-HSA-75955">
    <property type="pathway name" value="RNA Polymerase II Transcription Elongation"/>
</dbReference>
<dbReference type="Reactome" id="R-HSA-9603505">
    <property type="pathway name" value="NTRK3 as a dependence receptor"/>
</dbReference>
<dbReference type="SignaLink" id="Q8WX92"/>
<dbReference type="SIGNOR" id="Q8WX92"/>
<dbReference type="BioGRID-ORCS" id="25920">
    <property type="hits" value="694 hits in 1178 CRISPR screens"/>
</dbReference>
<dbReference type="ChiTaRS" id="NELFB">
    <property type="organism name" value="human"/>
</dbReference>
<dbReference type="GeneWiki" id="Cofactor_of_BRCA1"/>
<dbReference type="GenomeRNAi" id="25920"/>
<dbReference type="Pharos" id="Q8WX92">
    <property type="development level" value="Tbio"/>
</dbReference>
<dbReference type="PRO" id="PR:Q8WX92"/>
<dbReference type="Proteomes" id="UP000005640">
    <property type="component" value="Chromosome 9"/>
</dbReference>
<dbReference type="RNAct" id="Q8WX92">
    <property type="molecule type" value="protein"/>
</dbReference>
<dbReference type="Bgee" id="ENSG00000188986">
    <property type="expression patterns" value="Expressed in apex of heart and 200 other cell types or tissues"/>
</dbReference>
<dbReference type="GO" id="GO:0005737">
    <property type="term" value="C:cytoplasm"/>
    <property type="evidence" value="ECO:0000314"/>
    <property type="project" value="LIFEdb"/>
</dbReference>
<dbReference type="GO" id="GO:0032021">
    <property type="term" value="C:NELF complex"/>
    <property type="evidence" value="ECO:0000314"/>
    <property type="project" value="UniProtKB"/>
</dbReference>
<dbReference type="GO" id="GO:0005654">
    <property type="term" value="C:nucleoplasm"/>
    <property type="evidence" value="ECO:0000314"/>
    <property type="project" value="HPA"/>
</dbReference>
<dbReference type="GO" id="GO:0005634">
    <property type="term" value="C:nucleus"/>
    <property type="evidence" value="ECO:0000314"/>
    <property type="project" value="ComplexPortal"/>
</dbReference>
<dbReference type="GO" id="GO:0003723">
    <property type="term" value="F:RNA binding"/>
    <property type="evidence" value="ECO:0007669"/>
    <property type="project" value="UniProtKB-KW"/>
</dbReference>
<dbReference type="GO" id="GO:0008283">
    <property type="term" value="P:cell population proliferation"/>
    <property type="evidence" value="ECO:0000250"/>
    <property type="project" value="UniProtKB"/>
</dbReference>
<dbReference type="GO" id="GO:2000737">
    <property type="term" value="P:negative regulation of stem cell differentiation"/>
    <property type="evidence" value="ECO:0000250"/>
    <property type="project" value="UniProtKB"/>
</dbReference>
<dbReference type="GO" id="GO:0034244">
    <property type="term" value="P:negative regulation of transcription elongation by RNA polymerase II"/>
    <property type="evidence" value="ECO:0000314"/>
    <property type="project" value="ComplexPortal"/>
</dbReference>
<dbReference type="GO" id="GO:0048863">
    <property type="term" value="P:stem cell differentiation"/>
    <property type="evidence" value="ECO:0000250"/>
    <property type="project" value="UniProtKB"/>
</dbReference>
<dbReference type="InterPro" id="IPR010405">
    <property type="entry name" value="COBRA1"/>
</dbReference>
<dbReference type="PANTHER" id="PTHR13503:SF3">
    <property type="entry name" value="NEGATIVE ELONGATION FACTOR B"/>
    <property type="match status" value="1"/>
</dbReference>
<dbReference type="PANTHER" id="PTHR13503">
    <property type="entry name" value="NEGATIVE ELONGATION FACTOR COMPLEX MEMBER B"/>
    <property type="match status" value="1"/>
</dbReference>
<dbReference type="Pfam" id="PF06209">
    <property type="entry name" value="COBRA1"/>
    <property type="match status" value="1"/>
</dbReference>
<reference key="1">
    <citation type="journal article" date="2001" name="J. Cell Biol.">
        <title>BRCA1-induced large-scale chromatin unfolding and allele-specific effects of cancer-predisposing mutations.</title>
        <authorList>
            <person name="Ye Q."/>
            <person name="Hu Y.-F."/>
            <person name="Zhong H."/>
            <person name="Nye A.C."/>
            <person name="Belmont A.S."/>
            <person name="Li R."/>
        </authorList>
    </citation>
    <scope>NUCLEOTIDE SEQUENCE [MRNA]</scope>
    <scope>SUBCELLULAR LOCATION</scope>
    <scope>INTERACTION WITH BRCA1</scope>
    <source>
        <tissue>Ovary</tissue>
    </source>
</reference>
<reference key="2">
    <citation type="journal article" date="2004" name="Nat. Genet.">
        <title>Complete sequencing and characterization of 21,243 full-length human cDNAs.</title>
        <authorList>
            <person name="Ota T."/>
            <person name="Suzuki Y."/>
            <person name="Nishikawa T."/>
            <person name="Otsuki T."/>
            <person name="Sugiyama T."/>
            <person name="Irie R."/>
            <person name="Wakamatsu A."/>
            <person name="Hayashi K."/>
            <person name="Sato H."/>
            <person name="Nagai K."/>
            <person name="Kimura K."/>
            <person name="Makita H."/>
            <person name="Sekine M."/>
            <person name="Obayashi M."/>
            <person name="Nishi T."/>
            <person name="Shibahara T."/>
            <person name="Tanaka T."/>
            <person name="Ishii S."/>
            <person name="Yamamoto J."/>
            <person name="Saito K."/>
            <person name="Kawai Y."/>
            <person name="Isono Y."/>
            <person name="Nakamura Y."/>
            <person name="Nagahari K."/>
            <person name="Murakami K."/>
            <person name="Yasuda T."/>
            <person name="Iwayanagi T."/>
            <person name="Wagatsuma M."/>
            <person name="Shiratori A."/>
            <person name="Sudo H."/>
            <person name="Hosoiri T."/>
            <person name="Kaku Y."/>
            <person name="Kodaira H."/>
            <person name="Kondo H."/>
            <person name="Sugawara M."/>
            <person name="Takahashi M."/>
            <person name="Kanda K."/>
            <person name="Yokoi T."/>
            <person name="Furuya T."/>
            <person name="Kikkawa E."/>
            <person name="Omura Y."/>
            <person name="Abe K."/>
            <person name="Kamihara K."/>
            <person name="Katsuta N."/>
            <person name="Sato K."/>
            <person name="Tanikawa M."/>
            <person name="Yamazaki M."/>
            <person name="Ninomiya K."/>
            <person name="Ishibashi T."/>
            <person name="Yamashita H."/>
            <person name="Murakawa K."/>
            <person name="Fujimori K."/>
            <person name="Tanai H."/>
            <person name="Kimata M."/>
            <person name="Watanabe M."/>
            <person name="Hiraoka S."/>
            <person name="Chiba Y."/>
            <person name="Ishida S."/>
            <person name="Ono Y."/>
            <person name="Takiguchi S."/>
            <person name="Watanabe S."/>
            <person name="Yosida M."/>
            <person name="Hotuta T."/>
            <person name="Kusano J."/>
            <person name="Kanehori K."/>
            <person name="Takahashi-Fujii A."/>
            <person name="Hara H."/>
            <person name="Tanase T.-O."/>
            <person name="Nomura Y."/>
            <person name="Togiya S."/>
            <person name="Komai F."/>
            <person name="Hara R."/>
            <person name="Takeuchi K."/>
            <person name="Arita M."/>
            <person name="Imose N."/>
            <person name="Musashino K."/>
            <person name="Yuuki H."/>
            <person name="Oshima A."/>
            <person name="Sasaki N."/>
            <person name="Aotsuka S."/>
            <person name="Yoshikawa Y."/>
            <person name="Matsunawa H."/>
            <person name="Ichihara T."/>
            <person name="Shiohata N."/>
            <person name="Sano S."/>
            <person name="Moriya S."/>
            <person name="Momiyama H."/>
            <person name="Satoh N."/>
            <person name="Takami S."/>
            <person name="Terashima Y."/>
            <person name="Suzuki O."/>
            <person name="Nakagawa S."/>
            <person name="Senoh A."/>
            <person name="Mizoguchi H."/>
            <person name="Goto Y."/>
            <person name="Shimizu F."/>
            <person name="Wakebe H."/>
            <person name="Hishigaki H."/>
            <person name="Watanabe T."/>
            <person name="Sugiyama A."/>
            <person name="Takemoto M."/>
            <person name="Kawakami B."/>
            <person name="Yamazaki M."/>
            <person name="Watanabe K."/>
            <person name="Kumagai A."/>
            <person name="Itakura S."/>
            <person name="Fukuzumi Y."/>
            <person name="Fujimori Y."/>
            <person name="Komiyama M."/>
            <person name="Tashiro H."/>
            <person name="Tanigami A."/>
            <person name="Fujiwara T."/>
            <person name="Ono T."/>
            <person name="Yamada K."/>
            <person name="Fujii Y."/>
            <person name="Ozaki K."/>
            <person name="Hirao M."/>
            <person name="Ohmori Y."/>
            <person name="Kawabata A."/>
            <person name="Hikiji T."/>
            <person name="Kobatake N."/>
            <person name="Inagaki H."/>
            <person name="Ikema Y."/>
            <person name="Okamoto S."/>
            <person name="Okitani R."/>
            <person name="Kawakami T."/>
            <person name="Noguchi S."/>
            <person name="Itoh T."/>
            <person name="Shigeta K."/>
            <person name="Senba T."/>
            <person name="Matsumura K."/>
            <person name="Nakajima Y."/>
            <person name="Mizuno T."/>
            <person name="Morinaga M."/>
            <person name="Sasaki M."/>
            <person name="Togashi T."/>
            <person name="Oyama M."/>
            <person name="Hata H."/>
            <person name="Watanabe M."/>
            <person name="Komatsu T."/>
            <person name="Mizushima-Sugano J."/>
            <person name="Satoh T."/>
            <person name="Shirai Y."/>
            <person name="Takahashi Y."/>
            <person name="Nakagawa K."/>
            <person name="Okumura K."/>
            <person name="Nagase T."/>
            <person name="Nomura N."/>
            <person name="Kikuchi H."/>
            <person name="Masuho Y."/>
            <person name="Yamashita R."/>
            <person name="Nakai K."/>
            <person name="Yada T."/>
            <person name="Nakamura Y."/>
            <person name="Ohara O."/>
            <person name="Isogai T."/>
            <person name="Sugano S."/>
        </authorList>
    </citation>
    <scope>NUCLEOTIDE SEQUENCE [LARGE SCALE MRNA] (ISOFORM 2)</scope>
    <scope>NUCLEOTIDE SEQUENCE [LARGE SCALE MRNA] OF 99-580 (ISOFORMS 1/2)</scope>
    <source>
        <tissue>Brain</tissue>
        <tissue>Teratocarcinoma</tissue>
    </source>
</reference>
<reference key="3">
    <citation type="journal article" date="2004" name="Nature">
        <title>DNA sequence and analysis of human chromosome 9.</title>
        <authorList>
            <person name="Humphray S.J."/>
            <person name="Oliver K."/>
            <person name="Hunt A.R."/>
            <person name="Plumb R.W."/>
            <person name="Loveland J.E."/>
            <person name="Howe K.L."/>
            <person name="Andrews T.D."/>
            <person name="Searle S."/>
            <person name="Hunt S.E."/>
            <person name="Scott C.E."/>
            <person name="Jones M.C."/>
            <person name="Ainscough R."/>
            <person name="Almeida J.P."/>
            <person name="Ambrose K.D."/>
            <person name="Ashwell R.I.S."/>
            <person name="Babbage A.K."/>
            <person name="Babbage S."/>
            <person name="Bagguley C.L."/>
            <person name="Bailey J."/>
            <person name="Banerjee R."/>
            <person name="Barker D.J."/>
            <person name="Barlow K.F."/>
            <person name="Bates K."/>
            <person name="Beasley H."/>
            <person name="Beasley O."/>
            <person name="Bird C.P."/>
            <person name="Bray-Allen S."/>
            <person name="Brown A.J."/>
            <person name="Brown J.Y."/>
            <person name="Burford D."/>
            <person name="Burrill W."/>
            <person name="Burton J."/>
            <person name="Carder C."/>
            <person name="Carter N.P."/>
            <person name="Chapman J.C."/>
            <person name="Chen Y."/>
            <person name="Clarke G."/>
            <person name="Clark S.Y."/>
            <person name="Clee C.M."/>
            <person name="Clegg S."/>
            <person name="Collier R.E."/>
            <person name="Corby N."/>
            <person name="Crosier M."/>
            <person name="Cummings A.T."/>
            <person name="Davies J."/>
            <person name="Dhami P."/>
            <person name="Dunn M."/>
            <person name="Dutta I."/>
            <person name="Dyer L.W."/>
            <person name="Earthrowl M.E."/>
            <person name="Faulkner L."/>
            <person name="Fleming C.J."/>
            <person name="Frankish A."/>
            <person name="Frankland J.A."/>
            <person name="French L."/>
            <person name="Fricker D.G."/>
            <person name="Garner P."/>
            <person name="Garnett J."/>
            <person name="Ghori J."/>
            <person name="Gilbert J.G.R."/>
            <person name="Glison C."/>
            <person name="Grafham D.V."/>
            <person name="Gribble S."/>
            <person name="Griffiths C."/>
            <person name="Griffiths-Jones S."/>
            <person name="Grocock R."/>
            <person name="Guy J."/>
            <person name="Hall R.E."/>
            <person name="Hammond S."/>
            <person name="Harley J.L."/>
            <person name="Harrison E.S.I."/>
            <person name="Hart E.A."/>
            <person name="Heath P.D."/>
            <person name="Henderson C.D."/>
            <person name="Hopkins B.L."/>
            <person name="Howard P.J."/>
            <person name="Howden P.J."/>
            <person name="Huckle E."/>
            <person name="Johnson C."/>
            <person name="Johnson D."/>
            <person name="Joy A.A."/>
            <person name="Kay M."/>
            <person name="Keenan S."/>
            <person name="Kershaw J.K."/>
            <person name="Kimberley A.M."/>
            <person name="King A."/>
            <person name="Knights A."/>
            <person name="Laird G.K."/>
            <person name="Langford C."/>
            <person name="Lawlor S."/>
            <person name="Leongamornlert D.A."/>
            <person name="Leversha M."/>
            <person name="Lloyd C."/>
            <person name="Lloyd D.M."/>
            <person name="Lovell J."/>
            <person name="Martin S."/>
            <person name="Mashreghi-Mohammadi M."/>
            <person name="Matthews L."/>
            <person name="McLaren S."/>
            <person name="McLay K.E."/>
            <person name="McMurray A."/>
            <person name="Milne S."/>
            <person name="Nickerson T."/>
            <person name="Nisbett J."/>
            <person name="Nordsiek G."/>
            <person name="Pearce A.V."/>
            <person name="Peck A.I."/>
            <person name="Porter K.M."/>
            <person name="Pandian R."/>
            <person name="Pelan S."/>
            <person name="Phillimore B."/>
            <person name="Povey S."/>
            <person name="Ramsey Y."/>
            <person name="Rand V."/>
            <person name="Scharfe M."/>
            <person name="Sehra H.K."/>
            <person name="Shownkeen R."/>
            <person name="Sims S.K."/>
            <person name="Skuce C.D."/>
            <person name="Smith M."/>
            <person name="Steward C.A."/>
            <person name="Swarbreck D."/>
            <person name="Sycamore N."/>
            <person name="Tester J."/>
            <person name="Thorpe A."/>
            <person name="Tracey A."/>
            <person name="Tromans A."/>
            <person name="Thomas D.W."/>
            <person name="Wall M."/>
            <person name="Wallis J.M."/>
            <person name="West A.P."/>
            <person name="Whitehead S.L."/>
            <person name="Willey D.L."/>
            <person name="Williams S.A."/>
            <person name="Wilming L."/>
            <person name="Wray P.W."/>
            <person name="Young L."/>
            <person name="Ashurst J.L."/>
            <person name="Coulson A."/>
            <person name="Blocker H."/>
            <person name="Durbin R.M."/>
            <person name="Sulston J.E."/>
            <person name="Hubbard T."/>
            <person name="Jackson M.J."/>
            <person name="Bentley D.R."/>
            <person name="Beck S."/>
            <person name="Rogers J."/>
            <person name="Dunham I."/>
        </authorList>
    </citation>
    <scope>NUCLEOTIDE SEQUENCE [LARGE SCALE GENOMIC DNA]</scope>
</reference>
<reference key="4">
    <citation type="journal article" date="2004" name="Genome Res.">
        <title>The status, quality, and expansion of the NIH full-length cDNA project: the Mammalian Gene Collection (MGC).</title>
        <authorList>
            <consortium name="The MGC Project Team"/>
        </authorList>
    </citation>
    <scope>NUCLEOTIDE SEQUENCE [LARGE SCALE MRNA] OF 31-580 (ISOFORMS 1/2)</scope>
    <source>
        <tissue>Lung</tissue>
    </source>
</reference>
<reference key="5">
    <citation type="journal article" date="2001" name="Genome Res.">
        <title>Towards a catalog of human genes and proteins: sequencing and analysis of 500 novel complete protein coding human cDNAs.</title>
        <authorList>
            <person name="Wiemann S."/>
            <person name="Weil B."/>
            <person name="Wellenreuther R."/>
            <person name="Gassenhuber J."/>
            <person name="Glassl S."/>
            <person name="Ansorge W."/>
            <person name="Boecher M."/>
            <person name="Bloecker H."/>
            <person name="Bauersachs S."/>
            <person name="Blum H."/>
            <person name="Lauber J."/>
            <person name="Duesterhoeft A."/>
            <person name="Beyer A."/>
            <person name="Koehrer K."/>
            <person name="Strack N."/>
            <person name="Mewes H.-W."/>
            <person name="Ottenwaelder B."/>
            <person name="Obermaier B."/>
            <person name="Tampe J."/>
            <person name="Heubner D."/>
            <person name="Wambutt R."/>
            <person name="Korn B."/>
            <person name="Klein M."/>
            <person name="Poustka A."/>
        </authorList>
    </citation>
    <scope>NUCLEOTIDE SEQUENCE [LARGE SCALE MRNA] OF 182-580 (ISOFORMS 1/2)</scope>
    <source>
        <tissue>Uterus</tissue>
    </source>
</reference>
<reference key="6">
    <citation type="journal article" date="1999" name="DNA Res.">
        <title>Characterization of cDNA clones selected by the GeneMark analysis from size-fractionated cDNA libraries from human brain.</title>
        <authorList>
            <person name="Hirosawa M."/>
            <person name="Nagase T."/>
            <person name="Ishikawa K."/>
            <person name="Kikuno R."/>
            <person name="Nomura N."/>
            <person name="Ohara O."/>
        </authorList>
    </citation>
    <scope>NUCLEOTIDE SEQUENCE [LARGE SCALE MRNA] OF 371-580 (ISOFORMS 1/2)</scope>
    <source>
        <tissue>Brain</tissue>
    </source>
</reference>
<reference key="7">
    <citation type="journal article" date="2003" name="Mol. Cell. Biol.">
        <title>Human transcription elongation factor NELF: identification of novel subunits and reconstitution of the functionally active complex.</title>
        <authorList>
            <person name="Narita T."/>
            <person name="Yamaguchi Y."/>
            <person name="Yano K."/>
            <person name="Sugimoto S."/>
            <person name="Chanarat S."/>
            <person name="Wada T."/>
            <person name="Kim D.-K."/>
            <person name="Hasegawa J."/>
            <person name="Omori M."/>
            <person name="Inukai N."/>
            <person name="Endoh M."/>
            <person name="Yamada T."/>
            <person name="Handa H."/>
        </authorList>
    </citation>
    <scope>PROTEIN SEQUENCE OF 173-186; 399-412 AND 548-560</scope>
    <scope>IDENTIFICATION IN A NELF COMPLEX</scope>
    <scope>FUNCTION</scope>
    <scope>TISSUE SPECIFICITY</scope>
</reference>
<reference key="8">
    <citation type="journal article" date="1999" name="Cell">
        <title>NELF, a multisubunit complex containing RD, cooperates with DSIF to repress RNA polymerase II elongation.</title>
        <authorList>
            <person name="Yamaguchi Y."/>
            <person name="Takagi T."/>
            <person name="Wada T."/>
            <person name="Yano K."/>
            <person name="Furuya A."/>
            <person name="Sugimoto S."/>
            <person name="Hasegawa J."/>
            <person name="Handa H."/>
        </authorList>
    </citation>
    <scope>FUNCTION OF THE NELF COMPLEX</scope>
</reference>
<reference key="9">
    <citation type="journal article" date="2008" name="Proc. Natl. Acad. Sci. U.S.A.">
        <title>A quantitative atlas of mitotic phosphorylation.</title>
        <authorList>
            <person name="Dephoure N."/>
            <person name="Zhou C."/>
            <person name="Villen J."/>
            <person name="Beausoleil S.A."/>
            <person name="Bakalarski C.E."/>
            <person name="Elledge S.J."/>
            <person name="Gygi S.P."/>
        </authorList>
    </citation>
    <scope>PHOSPHORYLATION [LARGE SCALE ANALYSIS] AT SER-557</scope>
    <scope>IDENTIFICATION BY MASS SPECTROMETRY [LARGE SCALE ANALYSIS]</scope>
    <source>
        <tissue>Cervix carcinoma</tissue>
    </source>
</reference>
<reference key="10">
    <citation type="journal article" date="2009" name="Anal. Chem.">
        <title>Lys-N and trypsin cover complementary parts of the phosphoproteome in a refined SCX-based approach.</title>
        <authorList>
            <person name="Gauci S."/>
            <person name="Helbig A.O."/>
            <person name="Slijper M."/>
            <person name="Krijgsveld J."/>
            <person name="Heck A.J."/>
            <person name="Mohammed S."/>
        </authorList>
    </citation>
    <scope>IDENTIFICATION BY MASS SPECTROMETRY [LARGE SCALE ANALYSIS]</scope>
</reference>
<reference key="11">
    <citation type="journal article" date="2009" name="Sci. Signal.">
        <title>Quantitative phosphoproteomic analysis of T cell receptor signaling reveals system-wide modulation of protein-protein interactions.</title>
        <authorList>
            <person name="Mayya V."/>
            <person name="Lundgren D.H."/>
            <person name="Hwang S.-I."/>
            <person name="Rezaul K."/>
            <person name="Wu L."/>
            <person name="Eng J.K."/>
            <person name="Rodionov V."/>
            <person name="Han D.K."/>
        </authorList>
    </citation>
    <scope>PHOSPHORYLATION [LARGE SCALE ANALYSIS] AT SER-557</scope>
    <scope>IDENTIFICATION BY MASS SPECTROMETRY [LARGE SCALE ANALYSIS]</scope>
    <source>
        <tissue>Leukemic T-cell</tissue>
    </source>
</reference>
<reference key="12">
    <citation type="journal article" date="2009" name="Science">
        <title>Lysine acetylation targets protein complexes and co-regulates major cellular functions.</title>
        <authorList>
            <person name="Choudhary C."/>
            <person name="Kumar C."/>
            <person name="Gnad F."/>
            <person name="Nielsen M.L."/>
            <person name="Rehman M."/>
            <person name="Walther T.C."/>
            <person name="Olsen J.V."/>
            <person name="Mann M."/>
        </authorList>
    </citation>
    <scope>ACETYLATION [LARGE SCALE ANALYSIS] AT LYS-519</scope>
    <scope>IDENTIFICATION BY MASS SPECTROMETRY [LARGE SCALE ANALYSIS]</scope>
</reference>
<reference key="13">
    <citation type="journal article" date="2010" name="Sci. Signal.">
        <title>Quantitative phosphoproteomics reveals widespread full phosphorylation site occupancy during mitosis.</title>
        <authorList>
            <person name="Olsen J.V."/>
            <person name="Vermeulen M."/>
            <person name="Santamaria A."/>
            <person name="Kumar C."/>
            <person name="Miller M.L."/>
            <person name="Jensen L.J."/>
            <person name="Gnad F."/>
            <person name="Cox J."/>
            <person name="Jensen T.S."/>
            <person name="Nigg E.A."/>
            <person name="Brunak S."/>
            <person name="Mann M."/>
        </authorList>
    </citation>
    <scope>PHOSPHORYLATION [LARGE SCALE ANALYSIS] AT SER-557</scope>
    <scope>IDENTIFICATION BY MASS SPECTROMETRY [LARGE SCALE ANALYSIS]</scope>
    <source>
        <tissue>Cervix carcinoma</tissue>
    </source>
</reference>
<reference key="14">
    <citation type="journal article" date="2011" name="BMC Syst. Biol.">
        <title>Initial characterization of the human central proteome.</title>
        <authorList>
            <person name="Burkard T.R."/>
            <person name="Planyavsky M."/>
            <person name="Kaupe I."/>
            <person name="Breitwieser F.P."/>
            <person name="Buerckstuemmer T."/>
            <person name="Bennett K.L."/>
            <person name="Superti-Furga G."/>
            <person name="Colinge J."/>
        </authorList>
    </citation>
    <scope>IDENTIFICATION BY MASS SPECTROMETRY [LARGE SCALE ANALYSIS]</scope>
</reference>
<reference key="15">
    <citation type="journal article" date="2011" name="Mol. Cell. Biochem.">
        <title>Characterizing the novel protein p33MONOX.</title>
        <authorList>
            <person name="Mishra M."/>
            <person name="Inoue N."/>
            <person name="Heese K."/>
        </authorList>
    </citation>
    <scope>INTERACTION WITH KIAA1191</scope>
</reference>
<reference key="16">
    <citation type="journal article" date="2011" name="Sci. Signal.">
        <title>System-wide temporal characterization of the proteome and phosphoproteome of human embryonic stem cell differentiation.</title>
        <authorList>
            <person name="Rigbolt K.T."/>
            <person name="Prokhorova T.A."/>
            <person name="Akimov V."/>
            <person name="Henningsen J."/>
            <person name="Johansen P.T."/>
            <person name="Kratchmarova I."/>
            <person name="Kassem M."/>
            <person name="Mann M."/>
            <person name="Olsen J.V."/>
            <person name="Blagoev B."/>
        </authorList>
    </citation>
    <scope>IDENTIFICATION BY MASS SPECTROMETRY [LARGE SCALE ANALYSIS]</scope>
</reference>
<reference key="17">
    <citation type="journal article" date="2013" name="J. Biol. Chem.">
        <title>Negative elongation factor (NELF) coordinates RNA polymerase II pausing, premature termination, and chromatin remodeling to regulate HIV transcription.</title>
        <authorList>
            <person name="Natarajan M."/>
            <person name="Schiralli Lester G.M."/>
            <person name="Lee C."/>
            <person name="Missra A."/>
            <person name="Wasserman G.A."/>
            <person name="Steffen M."/>
            <person name="Gilmour D.S."/>
            <person name="Henderson A.J."/>
        </authorList>
    </citation>
    <scope>FUNCTION OF THE NELF COMPLEX IN HIV-1 LATENCY (MICROBIAL INFECTION)</scope>
</reference>
<reference key="18">
    <citation type="journal article" date="2013" name="J. Proteome Res.">
        <title>Toward a comprehensive characterization of a human cancer cell phosphoproteome.</title>
        <authorList>
            <person name="Zhou H."/>
            <person name="Di Palma S."/>
            <person name="Preisinger C."/>
            <person name="Peng M."/>
            <person name="Polat A.N."/>
            <person name="Heck A.J."/>
            <person name="Mohammed S."/>
        </authorList>
    </citation>
    <scope>PHOSPHORYLATION [LARGE SCALE ANALYSIS] AT SER-557</scope>
    <scope>IDENTIFICATION BY MASS SPECTROMETRY [LARGE SCALE ANALYSIS]</scope>
    <source>
        <tissue>Erythroleukemia</tissue>
    </source>
</reference>
<reference key="19">
    <citation type="journal article" date="2014" name="J. Proteomics">
        <title>An enzyme assisted RP-RPLC approach for in-depth analysis of human liver phosphoproteome.</title>
        <authorList>
            <person name="Bian Y."/>
            <person name="Song C."/>
            <person name="Cheng K."/>
            <person name="Dong M."/>
            <person name="Wang F."/>
            <person name="Huang J."/>
            <person name="Sun D."/>
            <person name="Wang L."/>
            <person name="Ye M."/>
            <person name="Zou H."/>
        </authorList>
    </citation>
    <scope>PHOSPHORYLATION [LARGE SCALE ANALYSIS] AT SER-557</scope>
    <scope>IDENTIFICATION BY MASS SPECTROMETRY [LARGE SCALE ANALYSIS]</scope>
    <source>
        <tissue>Liver</tissue>
    </source>
</reference>
<reference key="20">
    <citation type="journal article" date="2015" name="PLoS ONE">
        <title>Translational initiation at a non-AUG start codon for human and mouse negative elongation factor-B.</title>
        <authorList>
            <person name="Pan H."/>
            <person name="Zhao X."/>
            <person name="Zhang X."/>
            <person name="Abouelsoud M."/>
            <person name="Sun J."/>
            <person name="April C."/>
            <person name="Amleh A."/>
            <person name="Fan J.B."/>
            <person name="Hu Y."/>
            <person name="Li R."/>
        </authorList>
    </citation>
    <scope>ALTERNATIVE INITIATION (ISOFORM 2)</scope>
    <scope>CTG START CODON (ISOFORM 2)</scope>
</reference>
<reference key="21">
    <citation type="journal article" date="2016" name="Elife">
        <title>Architecture and RNA binding of the human negative elongation factor.</title>
        <authorList>
            <person name="Vos S.M."/>
            <person name="Pollmann D."/>
            <person name="Caizzi L."/>
            <person name="Hofmann K.B."/>
            <person name="Rombaut P."/>
            <person name="Zimniak T."/>
            <person name="Herzog F."/>
            <person name="Cramer P."/>
        </authorList>
    </citation>
    <scope>RECONSTITUTION OF THE NELF COMPLEX</scope>
    <scope>RNA BINDING</scope>
</reference>
<proteinExistence type="evidence at protein level"/>